<feature type="chain" id="PRO_0000088810" description="Serine/threonine-protein kinase mTOR">
    <location>
        <begin position="1"/>
        <end position="2549"/>
    </location>
</feature>
<feature type="repeat" description="HEAT 1">
    <location>
        <begin position="16"/>
        <end position="53"/>
    </location>
</feature>
<feature type="repeat" description="HEAT 2">
    <location>
        <begin position="55"/>
        <end position="99"/>
    </location>
</feature>
<feature type="repeat" description="HEAT 3">
    <location>
        <begin position="100"/>
        <end position="137"/>
    </location>
</feature>
<feature type="repeat" description="HEAT 4">
    <location>
        <begin position="138"/>
        <end position="179"/>
    </location>
</feature>
<feature type="repeat" description="HEAT 5">
    <location>
        <begin position="180"/>
        <end position="220"/>
    </location>
</feature>
<feature type="repeat" description="HEAT 6">
    <location>
        <begin position="222"/>
        <end position="276"/>
    </location>
</feature>
<feature type="repeat" description="HEAT 7">
    <location>
        <begin position="277"/>
        <end position="313"/>
    </location>
</feature>
<feature type="repeat" description="HEAT 8">
    <location>
        <begin position="314"/>
        <end position="364"/>
    </location>
</feature>
<feature type="repeat" description="HEAT 9">
    <location>
        <begin position="365"/>
        <end position="409"/>
    </location>
</feature>
<feature type="repeat" description="HEAT 10">
    <location>
        <begin position="410"/>
        <end position="445"/>
    </location>
</feature>
<feature type="repeat" description="HEAT 11">
    <location>
        <begin position="446"/>
        <end position="494"/>
    </location>
</feature>
<feature type="repeat" description="HEAT 12">
    <location>
        <begin position="495"/>
        <end position="529"/>
    </location>
</feature>
<feature type="repeat" description="HEAT 13">
    <location>
        <begin position="530"/>
        <end position="563"/>
    </location>
</feature>
<feature type="repeat" description="HEAT 14">
    <location>
        <begin position="564"/>
        <end position="596"/>
    </location>
</feature>
<feature type="repeat" description="HEAT 15">
    <location>
        <begin position="597"/>
        <end position="636"/>
    </location>
</feature>
<feature type="repeat" description="HEAT 16">
    <location>
        <begin position="637"/>
        <end position="683"/>
    </location>
</feature>
<feature type="repeat" description="HEAT 17">
    <location>
        <begin position="686"/>
        <end position="724"/>
    </location>
</feature>
<feature type="repeat" description="HEAT 18">
    <location>
        <begin position="727"/>
        <end position="766"/>
    </location>
</feature>
<feature type="repeat" description="HEAT 19">
    <location>
        <begin position="769"/>
        <end position="811"/>
    </location>
</feature>
<feature type="repeat" description="HEAT 20">
    <location>
        <begin position="814"/>
        <end position="853"/>
    </location>
</feature>
<feature type="repeat" description="HEAT 21">
    <location>
        <begin position="857"/>
        <end position="893"/>
    </location>
</feature>
<feature type="repeat" description="HEAT 22">
    <location>
        <begin position="894"/>
        <end position="942"/>
    </location>
</feature>
<feature type="repeat" description="HEAT 23">
    <location>
        <begin position="943"/>
        <end position="988"/>
    </location>
</feature>
<feature type="repeat" description="HEAT 24">
    <location>
        <begin position="989"/>
        <end position="1027"/>
    </location>
</feature>
<feature type="repeat" description="HEAT 25">
    <location>
        <begin position="1029"/>
        <end position="1068"/>
    </location>
</feature>
<feature type="repeat" description="HEAT 26">
    <location>
        <begin position="1069"/>
        <end position="1105"/>
    </location>
</feature>
<feature type="repeat" description="HEAT 27">
    <location>
        <begin position="1106"/>
        <end position="1144"/>
    </location>
</feature>
<feature type="repeat" description="HEAT 28">
    <location>
        <begin position="1145"/>
        <end position="1188"/>
    </location>
</feature>
<feature type="repeat" description="HEAT 29">
    <location>
        <begin position="1189"/>
        <end position="1225"/>
    </location>
</feature>
<feature type="repeat" description="HEAT 30">
    <location>
        <begin position="1226"/>
        <end position="1273"/>
    </location>
</feature>
<feature type="repeat" description="HEAT 31">
    <location>
        <begin position="1274"/>
        <end position="1311"/>
    </location>
</feature>
<feature type="repeat" description="HEAT 32">
    <location>
        <begin position="1312"/>
        <end position="1345"/>
    </location>
</feature>
<feature type="repeat" description="TPR 1">
    <location>
        <begin position="1346"/>
        <end position="1382"/>
    </location>
</feature>
<feature type="domain" description="FAT" evidence="4">
    <location>
        <begin position="1382"/>
        <end position="1982"/>
    </location>
</feature>
<feature type="repeat" description="TPR 2">
    <location>
        <begin position="1383"/>
        <end position="1408"/>
    </location>
</feature>
<feature type="repeat" description="TPR 3">
    <location>
        <begin position="1409"/>
        <end position="1442"/>
    </location>
</feature>
<feature type="repeat" description="TPR 4">
    <location>
        <begin position="1443"/>
        <end position="1473"/>
    </location>
</feature>
<feature type="repeat" description="TPR 5">
    <location>
        <begin position="1474"/>
        <end position="1507"/>
    </location>
</feature>
<feature type="repeat" description="TPR 6">
    <location>
        <begin position="1508"/>
        <end position="1541"/>
    </location>
</feature>
<feature type="repeat" description="TPR 7">
    <location>
        <begin position="1542"/>
        <end position="1574"/>
    </location>
</feature>
<feature type="repeat" description="TPR 8">
    <location>
        <begin position="1575"/>
        <end position="1614"/>
    </location>
</feature>
<feature type="repeat" description="TPR 9">
    <location>
        <begin position="1615"/>
        <end position="1649"/>
    </location>
</feature>
<feature type="repeat" description="TPR 10">
    <location>
        <begin position="1650"/>
        <end position="1693"/>
    </location>
</feature>
<feature type="repeat" description="TPR 11">
    <location>
        <begin position="1694"/>
        <end position="1731"/>
    </location>
</feature>
<feature type="repeat" description="TPR 12">
    <location>
        <begin position="1732"/>
        <end position="1786"/>
    </location>
</feature>
<feature type="repeat" description="TPR 13">
    <location>
        <begin position="1787"/>
        <end position="1846"/>
    </location>
</feature>
<feature type="repeat" description="TPR 14">
    <location>
        <begin position="1898"/>
        <end position="1930"/>
    </location>
</feature>
<feature type="repeat" description="TPR 15">
    <location>
        <begin position="1931"/>
        <end position="1970"/>
    </location>
</feature>
<feature type="repeat" description="TPR 16">
    <location>
        <begin position="1971"/>
        <end position="2005"/>
    </location>
</feature>
<feature type="domain" description="PI3K/PI4K catalytic" evidence="3">
    <location>
        <begin position="2156"/>
        <end position="2469"/>
    </location>
</feature>
<feature type="domain" description="FATC" evidence="4 5">
    <location>
        <begin position="2517"/>
        <end position="2549"/>
    </location>
</feature>
<feature type="region of interest" description="Interaction with NBN" evidence="1">
    <location>
        <begin position="1"/>
        <end position="651"/>
    </location>
</feature>
<feature type="region of interest" description="Disordered" evidence="6">
    <location>
        <begin position="1812"/>
        <end position="1867"/>
    </location>
</feature>
<feature type="region of interest" description="Sufficient for interaction with the FKBP1A/rapamycin complex" evidence="2">
    <location>
        <begin position="2012"/>
        <end position="2144"/>
    </location>
</feature>
<feature type="region of interest" description="G-loop" evidence="3">
    <location>
        <begin position="2162"/>
        <end position="2168"/>
    </location>
</feature>
<feature type="region of interest" description="Interaction with MLST8" evidence="1">
    <location>
        <begin position="2258"/>
        <end position="2296"/>
    </location>
</feature>
<feature type="region of interest" description="Catalytic loop" evidence="3">
    <location>
        <begin position="2335"/>
        <end position="2343"/>
    </location>
</feature>
<feature type="region of interest" description="Activation loop" evidence="3">
    <location>
        <begin position="2355"/>
        <end position="2380"/>
    </location>
</feature>
<feature type="compositionally biased region" description="Low complexity" evidence="6">
    <location>
        <begin position="1826"/>
        <end position="1860"/>
    </location>
</feature>
<feature type="binding site" evidence="1">
    <location>
        <position position="1662"/>
    </location>
    <ligand>
        <name>1D-myo-inositol hexakisphosphate</name>
        <dbReference type="ChEBI" id="CHEBI:58130"/>
    </ligand>
</feature>
<feature type="binding site" evidence="1">
    <location>
        <position position="1702"/>
    </location>
    <ligand>
        <name>1D-myo-inositol hexakisphosphate</name>
        <dbReference type="ChEBI" id="CHEBI:58130"/>
    </ligand>
</feature>
<feature type="binding site" evidence="1">
    <location>
        <position position="1749"/>
    </location>
    <ligand>
        <name>1D-myo-inositol hexakisphosphate</name>
        <dbReference type="ChEBI" id="CHEBI:58130"/>
    </ligand>
</feature>
<feature type="binding site" evidence="1">
    <location>
        <position position="2165"/>
    </location>
    <ligand>
        <name>ATP</name>
        <dbReference type="ChEBI" id="CHEBI:30616"/>
    </ligand>
</feature>
<feature type="binding site" evidence="1">
    <location>
        <position position="2167"/>
    </location>
    <ligand>
        <name>ATP</name>
        <dbReference type="ChEBI" id="CHEBI:30616"/>
    </ligand>
</feature>
<feature type="binding site" evidence="1">
    <location>
        <position position="2185"/>
    </location>
    <ligand>
        <name>ATP</name>
        <dbReference type="ChEBI" id="CHEBI:30616"/>
    </ligand>
</feature>
<feature type="binding site" evidence="1">
    <location>
        <position position="2187"/>
    </location>
    <ligand>
        <name>ATP</name>
        <dbReference type="ChEBI" id="CHEBI:30616"/>
    </ligand>
</feature>
<feature type="binding site" evidence="1">
    <location>
        <position position="2190"/>
    </location>
    <ligand>
        <name>ATP</name>
        <dbReference type="ChEBI" id="CHEBI:30616"/>
    </ligand>
</feature>
<feature type="binding site" evidence="1">
    <location>
        <position position="2225"/>
    </location>
    <ligand>
        <name>ATP</name>
        <dbReference type="ChEBI" id="CHEBI:30616"/>
    </ligand>
</feature>
<feature type="binding site" evidence="1">
    <location>
        <position position="2238"/>
    </location>
    <ligand>
        <name>ATP</name>
        <dbReference type="ChEBI" id="CHEBI:30616"/>
    </ligand>
</feature>
<feature type="binding site" evidence="1">
    <location>
        <position position="2239"/>
    </location>
    <ligand>
        <name>ATP</name>
        <dbReference type="ChEBI" id="CHEBI:30616"/>
    </ligand>
</feature>
<feature type="binding site" evidence="1">
    <location>
        <position position="2240"/>
    </location>
    <ligand>
        <name>ATP</name>
        <dbReference type="ChEBI" id="CHEBI:30616"/>
    </ligand>
</feature>
<feature type="binding site" evidence="1">
    <location>
        <position position="2245"/>
    </location>
    <ligand>
        <name>ATP</name>
        <dbReference type="ChEBI" id="CHEBI:30616"/>
    </ligand>
</feature>
<feature type="binding site" evidence="1">
    <location>
        <position position="2343"/>
    </location>
    <ligand>
        <name>Mg(2+)</name>
        <dbReference type="ChEBI" id="CHEBI:18420"/>
        <label>1</label>
    </ligand>
</feature>
<feature type="binding site" evidence="1">
    <location>
        <position position="2345"/>
    </location>
    <ligand>
        <name>ATP</name>
        <dbReference type="ChEBI" id="CHEBI:30616"/>
    </ligand>
</feature>
<feature type="binding site" evidence="1">
    <location>
        <position position="2356"/>
    </location>
    <ligand>
        <name>ATP</name>
        <dbReference type="ChEBI" id="CHEBI:30616"/>
    </ligand>
</feature>
<feature type="binding site" evidence="1">
    <location>
        <position position="2357"/>
    </location>
    <ligand>
        <name>Mg(2+)</name>
        <dbReference type="ChEBI" id="CHEBI:18420"/>
        <label>1</label>
    </ligand>
</feature>
<feature type="modified residue" description="N-acetylmethionine" evidence="1">
    <location>
        <position position="1"/>
    </location>
</feature>
<feature type="modified residue" description="Phosphoserine" evidence="1">
    <location>
        <position position="567"/>
    </location>
</feature>
<feature type="modified residue" description="Phosphothreonine" evidence="1">
    <location>
        <position position="1162"/>
    </location>
</feature>
<feature type="modified residue" description="N6-acetyllysine" evidence="1">
    <location>
        <position position="1218"/>
    </location>
</feature>
<feature type="modified residue" description="Phosphoserine" evidence="1">
    <location>
        <position position="1261"/>
    </location>
</feature>
<feature type="modified residue" description="Phosphoserine" evidence="1">
    <location>
        <position position="2159"/>
    </location>
</feature>
<feature type="modified residue" description="Phosphothreonine" evidence="7">
    <location>
        <position position="2164"/>
    </location>
</feature>
<feature type="modified residue" description="Phosphothreonine; by PKB/AKT1" evidence="1">
    <location>
        <position position="2173"/>
    </location>
</feature>
<feature type="modified residue" description="Phosphothreonine; by RPS6KB1" evidence="1">
    <location>
        <position position="2446"/>
    </location>
</feature>
<feature type="modified residue" description="Phosphoserine; by RPS6KB1" evidence="8">
    <location>
        <position position="2448"/>
    </location>
</feature>
<feature type="modified residue" description="Phosphoserine" evidence="1">
    <location>
        <position position="2478"/>
    </location>
</feature>
<feature type="modified residue" description="Phosphoserine; by autocatalysis" evidence="1">
    <location>
        <position position="2481"/>
    </location>
</feature>
<feature type="cross-link" description="Glycyl lysine isopeptide (Lys-Gly) (interchain with G-Cter in ubiquitin)" evidence="1">
    <location>
        <position position="2066"/>
    </location>
</feature>
<proteinExistence type="evidence at protein level"/>
<name>MTOR_RAT</name>
<comment type="function">
    <text evidence="1 2 9">Serine/threonine protein kinase which is a central regulator of cellular metabolism, growth and survival in response to hormones, growth factors, nutrients, energy and stress signals (By similarity). MTOR directly or indirectly regulates the phosphorylation of at least 800 proteins (By similarity). Functions as part of 2 structurally and functionally distinct signaling complexes mTORC1 and mTORC2 (mTOR complex 1 and 2) (By similarity). In response to nutrients, growth factors or amino acids, mTORC1 is recruited to the lysosome membrane and promotes protein, lipid and nucleotide synthesis by phosphorylating key regulators of mRNA translation and ribosome synthesis (By similarity). This includes phosphorylation of EIF4EBP1 and release of its inhibition toward the elongation initiation factor 4E (eiF4E) (By similarity). Moreover, phosphorylates and activates RPS6KB1 and RPS6KB2 that promote protein synthesis by modulating the activity of their downstream targets including ribosomal protein S6, eukaryotic translation initiation factor EIF4B, and the inhibitor of translation initiation PDCD4 (PubMed:9465032). Stimulates the pyrimidine biosynthesis pathway, both by acute regulation through RPS6KB1-mediated phosphorylation of the biosynthetic enzyme CAD, and delayed regulation, through transcriptional enhancement of the pentose phosphate pathway which produces 5-phosphoribosyl-1-pyrophosphate (PRPP), an allosteric activator of CAD at a later step in synthesis, this function is dependent on the mTORC1 complex (By similarity). Regulates ribosome synthesis by activating RNA polymerase III-dependent transcription through phosphorylation and inhibition of MAF1 an RNA polymerase III-repressor (By similarity). Activates dormant ribosomes by mediating phosphorylation of SERBP1, leading to SERBP1 inactivation and reactivation of translation (By similarity). In parallel to protein synthesis, also regulates lipid synthesis through SREBF1/SREBP1 and LPIN1 (By similarity). To maintain energy homeostasis mTORC1 may also regulate mitochondrial biogenesis through regulation of PPARGC1A (By similarity). In the same time, mTORC1 inhibits catabolic pathways: negatively regulates autophagy through phosphorylation of ULK1 (By similarity). Under nutrient sufficiency, phosphorylates ULK1 at 'Ser-758', disrupting the interaction with AMPK and preventing activation of ULK1 (By similarity). Also prevents autophagy through phosphorylation of the autophagy inhibitor DAP (By similarity). Also prevents autophagy by phosphorylating RUBCNL/Pacer under nutrient-rich conditions (By similarity). Prevents autophagy by mediating phosphorylation of AMBRA1, thereby inhibiting AMBRA1 ability to mediate ubiquitination of ULK1 and interaction between AMBRA1 and PPP2CA (By similarity). mTORC1 exerts a feedback control on upstream growth factor signaling that includes phosphorylation and activation of GRB10 a INSR-dependent signaling suppressor (By similarity). Among other potential targets mTORC1 may phosphorylate CLIP1 and regulate microtubules (By similarity). The mTORC1 complex is inhibited in response to starvation and amino acid depletion (By similarity). The non-canonical mTORC1 complex, which acts independently of RHEB, specifically mediates phosphorylation of MiT/TFE factors TFEB and TFE3 in the presence of nutrients, promoting their cytosolic retention and inactivation (By similarity). Upon starvation or lysosomal stress, inhibition of mTORC1 induces dephosphorylation and nuclear translocation of TFEB and TFE3, promoting their transcription factor activity (By similarity). The mTORC1 complex regulates pyroptosis in macrophages by promoting GSDMD oligomerization (By similarity). MTOR phosphorylates RPTOR which in turn inhibits mTORC1 (By similarity). As part of the mTORC2 complex, MTOR transduces signals from growth factors to pathways involved in proliferation, cytoskeletal organization, lipogenesis and anabolic output (By similarity). In response to growth factors, mTORC2 phosphorylates and activates AGC protein kinase family members, including AKT (AKT1, AKT2 and AKT3), PKC (PRKCA, PRKCB and PRKCE) and SGK1 (By similarity). In contrast to mTORC1, mTORC2 is nutrient-insensitive (By similarity). mTORC2 plays a critical role in AKT1 activation by mediating phosphorylation of different sites depending on the context, such as 'Thr-450', 'Ser-473', 'Ser-477' or 'Thr-479', facilitating the phosphorylation of the activation loop of AKT1 on 'Thr-308' by PDPK1/PDK1 which is a prerequisite for full activation (By similarity). mTORC2 also regulates the phosphorylation of SGK1 at 'Ser-422' (By similarity). mTORC2 may regulate the actin cytoskeleton, through phosphorylation of PRKCA, PXN and activation of the Rho-type guanine nucleotide exchange factors RHOA and RAC1A or RAC1B (By similarity). The mTORC2 complex also phosphorylates various proteins involved in insulin signaling, such as FBXW8 and IGF2BP1 (By similarity). May also regulate insulin signaling by acting as a tyrosine protein kinase that catalyzes phosphorylation of IGF1R and INSR (By similarity). Regulates osteoclastogenesis by adjusting the expression of CEBPB isoforms (By similarity). Plays an important regulatory role in the circadian clock function; regulates period length and rhythm amplitude of the suprachiasmatic nucleus (SCN) and liver clocks (By similarity).</text>
</comment>
<comment type="catalytic activity">
    <reaction evidence="9">
        <text>L-seryl-[protein] + ATP = O-phospho-L-seryl-[protein] + ADP + H(+)</text>
        <dbReference type="Rhea" id="RHEA:17989"/>
        <dbReference type="Rhea" id="RHEA-COMP:9863"/>
        <dbReference type="Rhea" id="RHEA-COMP:11604"/>
        <dbReference type="ChEBI" id="CHEBI:15378"/>
        <dbReference type="ChEBI" id="CHEBI:29999"/>
        <dbReference type="ChEBI" id="CHEBI:30616"/>
        <dbReference type="ChEBI" id="CHEBI:83421"/>
        <dbReference type="ChEBI" id="CHEBI:456216"/>
        <dbReference type="EC" id="2.7.11.1"/>
    </reaction>
</comment>
<comment type="catalytic activity">
    <reaction evidence="9">
        <text>L-threonyl-[protein] + ATP = O-phospho-L-threonyl-[protein] + ADP + H(+)</text>
        <dbReference type="Rhea" id="RHEA:46608"/>
        <dbReference type="Rhea" id="RHEA-COMP:11060"/>
        <dbReference type="Rhea" id="RHEA-COMP:11605"/>
        <dbReference type="ChEBI" id="CHEBI:15378"/>
        <dbReference type="ChEBI" id="CHEBI:30013"/>
        <dbReference type="ChEBI" id="CHEBI:30616"/>
        <dbReference type="ChEBI" id="CHEBI:61977"/>
        <dbReference type="ChEBI" id="CHEBI:456216"/>
        <dbReference type="EC" id="2.7.11.1"/>
    </reaction>
</comment>
<comment type="catalytic activity">
    <reaction evidence="1">
        <text>L-tyrosyl-[protein] + ATP = O-phospho-L-tyrosyl-[protein] + ADP + H(+)</text>
        <dbReference type="Rhea" id="RHEA:10596"/>
        <dbReference type="Rhea" id="RHEA-COMP:10136"/>
        <dbReference type="Rhea" id="RHEA-COMP:20101"/>
        <dbReference type="ChEBI" id="CHEBI:15378"/>
        <dbReference type="ChEBI" id="CHEBI:30616"/>
        <dbReference type="ChEBI" id="CHEBI:46858"/>
        <dbReference type="ChEBI" id="CHEBI:61978"/>
        <dbReference type="ChEBI" id="CHEBI:456216"/>
        <dbReference type="EC" id="2.7.10.2"/>
    </reaction>
    <physiologicalReaction direction="left-to-right" evidence="1">
        <dbReference type="Rhea" id="RHEA:10597"/>
    </physiologicalReaction>
</comment>
<comment type="activity regulation">
    <text evidence="1">The mTORC1 complex is activated in response to nutrients, growth factors or amino acids: activation requires relocalization of the mTORC1 complex to lysosomes that is mediated by the Ragulator complex, SLC38A9, and the Rag GTPases RagA/RRAGA, RagB/RRAGB, RagC/RRAGC and RagD/RRAGD. Activation of mTORC1 by growth factors such as insulin involves AKT1-mediated phosphorylation of TSC1-TSC2, which leads to the activation of the RHEB GTPase a potent activator of the protein kinase activity of mTORC1. Insulin-stimulated and amino acid-dependent phosphorylation at Ser-1261 promotes autophosphorylation and the activation of mTORC1. On the other hand, low cellular energy levels can inhibit mTORC1 through activation of PRKAA1 while hypoxia inhibits mTORC1 through a REDD1-dependent mechanism which may also require PRKAA1. The kinase activity of MTOR within the mTORC1 complex is positively regulated by MLST8. The kinase activity of MTOR is inhibited by DEPTOR and AKT1S1. The non-canonical mTORC1 complex is independent of the RHEB GTPase and specifically mediates phosphorylation of MiT/TFE factors TFEB and TFE3 but not other mTORC1 substrates: it is activated by FLCN, which activates Rag GTPases RagC/RRAGC and RagD/RRAGD. MTOR is the target of the immunosuppressive and anti-cancer drug rapamycin which acts in complex with FKBP1A/FKBP12, and specifically inhibits its kinase activity. mTORC2 is also activated by growth factors, but seems to be nutrient-insensitive. mTORC2 associates and is directly activated by ribosomes. mTORC2 may also be regulated by RHEB but in an indirect manner through the PI3K signaling pathway.</text>
</comment>
<comment type="subunit">
    <text evidence="1 2">Part of the mechanistic target of rapamycin complex 1 (mTORC1) which contains MTOR, MLST8 and RPTOR. The mTORC1 complex is a 1 Md obligate dimer of two stoichiometric heterotetramers with overall dimensions of 290 A x 210 A x 135 A. It has a rhomboid shape and a central cavity, the dimeric interfaces are formed by interlocking interactions between the two MTOR and the two RPTOR subunits. The MLST8 subunit forms distal foot-like protuberances, and contacts only one MTOR within the complex, while the small AKT1S1/PRAS40 localizes to the midsection of the central core, in close proximity to RPTOR. mTORC1 associates with AKT1S1/PRAS40, which inhibits its activity by blocking MTOR substrate-recruitment site. Component of the mechanistic target of rapamycin complex 2 (mTORC2), consisting in two heterotretramers composed of MTOR, MLST8, RICTOR and MAPKAP1/SIN1 (By similarity). Interacts with PLPP7 and PML (By similarity). Interacts with PRR5 and RICTOR; the interaction is direct within the mTORC2 complex and interaction with RICTOR is enhanced by deubiquitination of RICTOR by USP9X. mTORC1 and mTORC2 associate with DEPTOR, which regulates their activity. Interacts with WAC; WAC positively regulates MTOR activity by promoting the assembly of the TTT complex composed of TELO2, TTI1 and TTI2 and the RUVBL complex composed of RUVBL1 and RUVBL2 into the TTT-RUVBL complex which leads to the dimerization of the mTORC1 complex and its subsequent activation. Interacts with UBQLN1. Interacts with TTI1 and TELO2. Interacts with CLIP1; phosphorylates and regulates CLIP1. Interacts with NBN. Interacts with HTR6. Interacts with BRAT1. Interacts with MEAK7 (via C-terminal domain); the interaction increases upon nutrient stimulation. Interacts with TM4SF5; the interaction is positively regulated by arginine and is negatively regulated by leucine. Interacts with GPR137B. Interacts with NCKAP1L. Interacts with TPCN1 and TPCN2; the interaction is required for TPCN1 and TPCN2 sensitivity to ATP (By similarity). Interacts with ATP6V1A and with CRYAB, forming a ternary complex (By similarity). Interacts with SLC38A7; this interaction mediates the recruitment of mTORC1 to the lysosome and its subsequent activation (By similarity). Interacts with TSPAN8 (By similarity).</text>
</comment>
<comment type="interaction">
    <interactant intactId="EBI-1571489">
        <id>P42346</id>
    </interactant>
    <interactant intactId="EBI-2359040">
        <id>Q8TB45</id>
        <label>DEPTOR</label>
    </interactant>
    <organismsDiffer>true</organismsDiffer>
    <experiments>2</experiments>
</comment>
<comment type="subcellular location">
    <subcellularLocation>
        <location evidence="1">Lysosome membrane</location>
        <topology evidence="1">Peripheral membrane protein</topology>
        <orientation evidence="1">Cytoplasmic side</orientation>
    </subcellularLocation>
    <subcellularLocation>
        <location evidence="1">Endoplasmic reticulum membrane</location>
        <topology evidence="1">Peripheral membrane protein</topology>
        <orientation evidence="1">Cytoplasmic side</orientation>
    </subcellularLocation>
    <subcellularLocation>
        <location evidence="1">Golgi apparatus membrane</location>
        <topology evidence="1">Peripheral membrane protein</topology>
        <orientation evidence="1">Cytoplasmic side</orientation>
    </subcellularLocation>
    <subcellularLocation>
        <location evidence="1">Cell membrane</location>
        <topology evidence="1">Peripheral membrane protein</topology>
    </subcellularLocation>
    <subcellularLocation>
        <location evidence="1">Mitochondrion outer membrane</location>
        <topology evidence="1">Peripheral membrane protein</topology>
        <orientation evidence="1">Cytoplasmic side</orientation>
    </subcellularLocation>
    <subcellularLocation>
        <location evidence="1">Cytoplasm</location>
    </subcellularLocation>
    <subcellularLocation>
        <location evidence="2">Nucleus</location>
    </subcellularLocation>
    <subcellularLocation>
        <location evidence="2">Nucleus</location>
        <location evidence="2">PML body</location>
    </subcellularLocation>
    <subcellularLocation>
        <location evidence="1">Microsome membrane</location>
    </subcellularLocation>
    <subcellularLocation>
        <location evidence="1">Cytoplasmic vesicle</location>
        <location evidence="1">Phagosome</location>
    </subcellularLocation>
    <text evidence="1 2">Shuttles between cytoplasm and nucleus. Accumulates in the nucleus in response to hypoxia (By similarity). Targeting to lysosomes depends on amino acid availability and RRAGA and RRAGB. Lysosome targeting also depends on interaction with MEAK7. Translocates to the lysosome membrane in the presence of TM4SF5 (By similarity). The mTORC2 complex localizes to membranes: mTORC2 is active at the plasma membrane, endoplasmic reticulum membrane and lysosomes (By similarity).</text>
</comment>
<comment type="domain">
    <text evidence="1">The kinase domain (PI3K/PI4K) is intrinsically active but has a highly restricted catalytic center.</text>
</comment>
<comment type="domain">
    <text evidence="1">The FAT domain forms three discontinuous subdomains of alpha-helical TPR repeats plus a single subdomain of HEAT repeats. The four domains pack sequentially to form a C-shaped a-solenoid that clamps onto the kinase domain (By similarity).</text>
</comment>
<comment type="PTM">
    <text evidence="1">Autophosphorylates when part of mTORC1 or mTORC2 (By similarity). Phosphorylation at Ser-1261, Ser-2159 and Thr-2164 promotes autophosphorylation (By similarity). Phosphorylated at Ser-2448 by RPS6KB1 (By similarity). Phosphorylation in the kinase domain modulates the interactions of MTOR with RPTOR and AKT1S1/PRAS40 and leads to increased intrinsic mTORC1 kinase activity (By similarity). Phosphorylation at Ser-2159 by TBK1 in response to growth factors and pathogen recognition receptors promotes mTORC1 activity (By similarity). Phosphorylation at Ser-2159 by TBK1 in response to EGF growth factor promotes mTORC2 activity, leading to AKT1 phosphorylation and activation (By similarity). Phosphorylation at Thr-2173 in the ATP-binding region by AKT1 strongly reduces kinase activity (By similarity).</text>
</comment>
<comment type="PTM">
    <text evidence="1">Ubiquitinated at Lys-2066 by the SCF(FBXO22) complex via 'Lys-27'-linked ubiquitination prevents mTORC1 substrate recruitment.</text>
</comment>
<comment type="similarity">
    <text evidence="10">Belongs to the PI3/PI4-kinase family.</text>
</comment>
<protein>
    <recommendedName>
        <fullName evidence="10">Serine/threonine-protein kinase mTOR</fullName>
        <ecNumber evidence="9">2.7.11.1</ecNumber>
    </recommendedName>
    <alternativeName>
        <fullName>FK506-binding protein 12-rapamycin complex-associated protein 1</fullName>
    </alternativeName>
    <alternativeName>
        <fullName>FKBP12-rapamycin complex-associated protein</fullName>
    </alternativeName>
    <alternativeName>
        <fullName>Mammalian target of rapamycin</fullName>
        <shortName>mTOR</shortName>
    </alternativeName>
    <alternativeName>
        <fullName>Mechanistic target of rapamycin</fullName>
    </alternativeName>
    <alternativeName>
        <fullName>Rapamycin target protein 1</fullName>
        <shortName>RAPT1</shortName>
    </alternativeName>
    <alternativeName>
        <fullName evidence="10">Tyrosine-protein kinase mTOR</fullName>
        <ecNumber evidence="1">2.7.10.2</ecNumber>
    </alternativeName>
</protein>
<keyword id="KW-0007">Acetylation</keyword>
<keyword id="KW-0067">ATP-binding</keyword>
<keyword id="KW-1003">Cell membrane</keyword>
<keyword id="KW-0963">Cytoplasm</keyword>
<keyword id="KW-0968">Cytoplasmic vesicle</keyword>
<keyword id="KW-0903">Direct protein sequencing</keyword>
<keyword id="KW-0256">Endoplasmic reticulum</keyword>
<keyword id="KW-0333">Golgi apparatus</keyword>
<keyword id="KW-1017">Isopeptide bond</keyword>
<keyword id="KW-0418">Kinase</keyword>
<keyword id="KW-0458">Lysosome</keyword>
<keyword id="KW-0460">Magnesium</keyword>
<keyword id="KW-0472">Membrane</keyword>
<keyword id="KW-0479">Metal-binding</keyword>
<keyword id="KW-0492">Microsome</keyword>
<keyword id="KW-0496">Mitochondrion</keyword>
<keyword id="KW-1000">Mitochondrion outer membrane</keyword>
<keyword id="KW-0547">Nucleotide-binding</keyword>
<keyword id="KW-0539">Nucleus</keyword>
<keyword id="KW-0597">Phosphoprotein</keyword>
<keyword id="KW-1185">Reference proteome</keyword>
<keyword id="KW-0677">Repeat</keyword>
<keyword id="KW-0723">Serine/threonine-protein kinase</keyword>
<keyword id="KW-0802">TPR repeat</keyword>
<keyword id="KW-0808">Transferase</keyword>
<keyword id="KW-0832">Ubl conjugation</keyword>
<sequence length="2549" mass="288794">MLGTGPATATAGAATSSNVSVLQQFASGLKSRNEETRAKAAKELQHYVTMELREMSQEESTRFYDQLNHHIFELVSSSDANERKGGILAIASLIGVEGGNSTRIGRFANYLRNLLPSSDPVVMEMASKAIGRLAMAGDTFTAEYVEFEVKRALEWLGADRNEGRRHAAVLVLRELAISVPTFFFQQVQPFFDNIFVAVWDPKQAIREGAVAALRACLILTTQREPKEMQKPQWYRHTFEEAEKGFDETLAKEKGMNRDDRIHGALLILNELVRISSMEGERLREEMEEITQQQLVHDKYCKDLMGFGTKPRHITPFTSFQAVQPQQSNALVGLLGYSSHQGLMGFGASPSPTKSTLVESRCCRDLMEEKFDQVCQWVLKCRSSKNSLIQMTILNLLPRLAAFRPSAFTDTQYLQDTMNHVLSCVKKEKERTAAFQALGLLSVAVRSEFKVYLPRVLDIIRAALPPKDFAHKRQKTVQVDATVFTCISMLARAMGPGIQQDIKELLEPMLAVGLSPALTAVLYDLSRQIPQLKKDIQDGLLKMLSLVLMHKPLRHPGMPKGLAHQLASPGLTTLPEASDVASITLALRTLGSFEFEGHSLTQFVRHCADHFLNSEHKEIRMEAARTCSRLLTPSIHLISGHAHVVSQTAVQVVADVLSKLLVVGITDPDPDIRYCVLASLDERFDAHLAQAENLQALFVALNDQVFEIRELAICTVGRLSSMNPAFVMPFLRKMLIQILTELEHSGIGRIKEQSARMLGHLVSNAPRLIRPYMEPILKALILKLKDPDPDPNPGVINNVLATIGELAQVSGLEMRKWVDELFVIIMDMLQDSSLLAKRQVALWTLGQLVASTGYVVEPYRKYPTLLEVLLNFLKTEQNQGTRREAIRVLGLLGALDPYKHKVNIGMIDQSRDASAVSLSESKSSQDSSDYSTSEMLVNMGNLPLDEFYPAVSMVALMRIFRDQSLSHHHTMVVQAITFIFKSLGLKCVQFLPQVMPTFLNVIRVCDGAIREFLFQQLGMLVSFVKSHIRPYMDEIVTLMREFWVMNTSIQSTIILLIEQIVVALGGEFKLYLPQLIPHMLRVFMHDNSQGRIVSIKLLAAIQLFGANLDDYLHLLLPPIVKLFDAPEVPLPSRKAALETVDRLTESLDFTDYASRIIHPIVRTLDQSPELRSTAMDTLSSLVFQLGKKYQIFIPMVNKVLVRHRINHQRYDVLICRIVKGYTLADEEEDPLIYQHRMLRSSQGDALASGPVETGPMKKLHVSTINLQKAWGAARRVSKDDWLEWLRRLSLELLKDSSSPSLRSCWALAQAYNPMARDLFNAAFVSCWSELNEDQQDELIRSIELALTSQDIAEVTQTLLNLAEFMEHSDKGPLPLRDDNGIVLLGERAAKCRAYAKALHYKELEFQKGPTPAILESLISINNKLQQPEAASGVLEYAMKHFGELEIQATWYEKLHEWEDALVAYDKKMDTNKDDPELMLGRMRCLEALGEWGQLHQQCCEKWTLVNDETQAKMARMAAAAAWGLGQWDSMEEYTCMIPRDTHDGAFYRAVLALHQDLFSLAQQCIDKARDLLDAELTAMAGESYSRAYGAMVSCHMLSELEEVIQYKLVPERREIIRQIWWERLQGCQRIVEDWQKILMVRSLVVSPHEDMRTWLKYASLCGKSGRLALAHKTLVLLLGVDPSRQLDHPLPTVHPQVTYAYMKNMWKSARKIDAFQHMQHFVQTMQQQAQHAIATEDQQHKQELHKLMARCFLKLGEWQLNLQGINESTIPKVLQYYSAATEHDRSWYKAWHAWAVMNFEAVLHYKHQNQARDEKKKLRHASGANITNATTTATTAASAAAATSTEGSNSESEAESNESSPTPSPLQKKVTEDLSKTLLLYTVPAVQGFFRSISLSRGNNLQDTLRVLTLWFDYGHWPDVNEALVEGVKAIQIDTWLQVIPQLIARIDTPRPLVGRLIHQLLTDIGRYHPQALIYPLTVASKSTTTARHNAANKILKNMCEHSNTLVQQAMMVSEELIRVAILWHEMWHEGLEEASRLYFGERNVKGMFEVLEPLHAMMERGPQTLKETSFNQAYGRDLMEAQEWCRKYMKSGNVKDLTQAWDLYYHVFRRISKQLPQLTSLELQYVSPKLLMCRDLELAVPGTYDPNQPIIRIQSIAPSLQVITSKQRPRKLTLMGSNGHEFVFLLKGHEDLRQDERVMQLFGLVNTLLANDPTSLRKNLSIQRYAVIPLSTNSGLIGWVPHCDTLHALIRDYREKKKILLNIEHRIMLRMAPDYDHLTLMQKVEVFEHAVNNTAGDDLAKLLWLKSPSSEVWFDRRTNYTRSLAVMSMVGYILGLGDRHPSNLMLDRLSGKILHIDFGDCFEVAMTREKFPEKIPFRLTRMLTNAMEVTGLDGNYRTTCHTVMEVLREHKDSVMAVLEAFVYDPLLNWRLMDTNAKGNKRSRTRTDSYSAGQSVEILDGVELGEPAHKKTGTTVPESIHSFIGDGLVKPEALNKKAIQIINRVRDKLTGRDFSHDDTLDVPTQVELLIKQATSHENLCQCYIGWCPFW</sequence>
<dbReference type="EC" id="2.7.11.1" evidence="9"/>
<dbReference type="EC" id="2.7.10.2" evidence="1"/>
<dbReference type="EMBL" id="L37085">
    <property type="protein sequence ID" value="AAA65929.1"/>
    <property type="molecule type" value="mRNA"/>
</dbReference>
<dbReference type="EMBL" id="U11681">
    <property type="protein sequence ID" value="AAA20091.1"/>
    <property type="molecule type" value="mRNA"/>
</dbReference>
<dbReference type="PIR" id="A54837">
    <property type="entry name" value="A54837"/>
</dbReference>
<dbReference type="RefSeq" id="NP_063971.1">
    <property type="nucleotide sequence ID" value="NM_019906.2"/>
</dbReference>
<dbReference type="BMRB" id="P42346"/>
<dbReference type="SMR" id="P42346"/>
<dbReference type="BioGRID" id="248568">
    <property type="interactions" value="6"/>
</dbReference>
<dbReference type="CORUM" id="P42346"/>
<dbReference type="DIP" id="DIP-261N"/>
<dbReference type="FunCoup" id="P42346">
    <property type="interactions" value="3726"/>
</dbReference>
<dbReference type="IntAct" id="P42346">
    <property type="interactions" value="11"/>
</dbReference>
<dbReference type="MINT" id="P42346"/>
<dbReference type="STRING" id="10116.ENSRNOP00000014167"/>
<dbReference type="BindingDB" id="P42346"/>
<dbReference type="ChEMBL" id="CHEMBL1075134"/>
<dbReference type="CarbonylDB" id="P42346"/>
<dbReference type="GlyGen" id="P42346">
    <property type="glycosylation" value="3 sites"/>
</dbReference>
<dbReference type="iPTMnet" id="P42346"/>
<dbReference type="PhosphoSitePlus" id="P42346"/>
<dbReference type="jPOST" id="P42346"/>
<dbReference type="PaxDb" id="10116-ENSRNOP00000014167"/>
<dbReference type="GeneID" id="56718"/>
<dbReference type="KEGG" id="rno:56718"/>
<dbReference type="UCSC" id="RGD:68371">
    <property type="organism name" value="rat"/>
</dbReference>
<dbReference type="AGR" id="RGD:68371"/>
<dbReference type="CTD" id="2475"/>
<dbReference type="RGD" id="68371">
    <property type="gene designation" value="Mtor"/>
</dbReference>
<dbReference type="VEuPathDB" id="HostDB:ENSRNOG00000009615"/>
<dbReference type="eggNOG" id="KOG0891">
    <property type="taxonomic scope" value="Eukaryota"/>
</dbReference>
<dbReference type="HOGENOM" id="CLU_000178_7_1_1"/>
<dbReference type="InParanoid" id="P42346"/>
<dbReference type="OrthoDB" id="54464at9989"/>
<dbReference type="PhylomeDB" id="P42346"/>
<dbReference type="TreeFam" id="TF105134"/>
<dbReference type="Reactome" id="R-RNO-1257604">
    <property type="pathway name" value="PIP3 activates AKT signaling"/>
</dbReference>
<dbReference type="Reactome" id="R-RNO-1632852">
    <property type="pathway name" value="Macroautophagy"/>
</dbReference>
<dbReference type="Reactome" id="R-RNO-165159">
    <property type="pathway name" value="MTOR signalling"/>
</dbReference>
<dbReference type="Reactome" id="R-RNO-166208">
    <property type="pathway name" value="mTORC1-mediated signalling"/>
</dbReference>
<dbReference type="Reactome" id="R-RNO-3371571">
    <property type="pathway name" value="HSF1-dependent transactivation"/>
</dbReference>
<dbReference type="Reactome" id="R-RNO-380972">
    <property type="pathway name" value="Energy dependent regulation of mTOR by LKB1-AMPK"/>
</dbReference>
<dbReference type="Reactome" id="R-RNO-389357">
    <property type="pathway name" value="CD28 dependent PI3K/Akt signaling"/>
</dbReference>
<dbReference type="Reactome" id="R-RNO-5218920">
    <property type="pathway name" value="VEGFR2 mediated vascular permeability"/>
</dbReference>
<dbReference type="Reactome" id="R-RNO-5628897">
    <property type="pathway name" value="TP53 Regulates Metabolic Genes"/>
</dbReference>
<dbReference type="Reactome" id="R-RNO-6804757">
    <property type="pathway name" value="Regulation of TP53 Degradation"/>
</dbReference>
<dbReference type="Reactome" id="R-RNO-8943724">
    <property type="pathway name" value="Regulation of PTEN gene transcription"/>
</dbReference>
<dbReference type="Reactome" id="R-RNO-9639288">
    <property type="pathway name" value="Amino acids regulate mTORC1"/>
</dbReference>
<dbReference type="Reactome" id="R-RNO-9856530">
    <property type="pathway name" value="High laminar flow shear stress activates signaling by PIEZO1 and PECAM1:CDH5:KDR in endothelial cells"/>
</dbReference>
<dbReference type="PRO" id="PR:P42346"/>
<dbReference type="Proteomes" id="UP000002494">
    <property type="component" value="Chromosome 5"/>
</dbReference>
<dbReference type="Bgee" id="ENSRNOG00000009615">
    <property type="expression patterns" value="Expressed in skeletal muscle tissue and 18 other cell types or tissues"/>
</dbReference>
<dbReference type="ExpressionAtlas" id="P42346">
    <property type="expression patterns" value="baseline and differential"/>
</dbReference>
<dbReference type="GO" id="GO:0005737">
    <property type="term" value="C:cytoplasm"/>
    <property type="evidence" value="ECO:0000266"/>
    <property type="project" value="RGD"/>
</dbReference>
<dbReference type="GO" id="GO:0005829">
    <property type="term" value="C:cytosol"/>
    <property type="evidence" value="ECO:0000266"/>
    <property type="project" value="RGD"/>
</dbReference>
<dbReference type="GO" id="GO:0030425">
    <property type="term" value="C:dendrite"/>
    <property type="evidence" value="ECO:0000314"/>
    <property type="project" value="RGD"/>
</dbReference>
<dbReference type="GO" id="GO:0012505">
    <property type="term" value="C:endomembrane system"/>
    <property type="evidence" value="ECO:0000266"/>
    <property type="project" value="RGD"/>
</dbReference>
<dbReference type="GO" id="GO:0005783">
    <property type="term" value="C:endoplasmic reticulum"/>
    <property type="evidence" value="ECO:0000250"/>
    <property type="project" value="UniProtKB"/>
</dbReference>
<dbReference type="GO" id="GO:0005789">
    <property type="term" value="C:endoplasmic reticulum membrane"/>
    <property type="evidence" value="ECO:0007669"/>
    <property type="project" value="UniProtKB-SubCell"/>
</dbReference>
<dbReference type="GO" id="GO:0098978">
    <property type="term" value="C:glutamatergic synapse"/>
    <property type="evidence" value="ECO:0000314"/>
    <property type="project" value="SynGO"/>
</dbReference>
<dbReference type="GO" id="GO:0000139">
    <property type="term" value="C:Golgi membrane"/>
    <property type="evidence" value="ECO:0007669"/>
    <property type="project" value="UniProtKB-SubCell"/>
</dbReference>
<dbReference type="GO" id="GO:0005765">
    <property type="term" value="C:lysosomal membrane"/>
    <property type="evidence" value="ECO:0000250"/>
    <property type="project" value="UniProtKB"/>
</dbReference>
<dbReference type="GO" id="GO:0005764">
    <property type="term" value="C:lysosome"/>
    <property type="evidence" value="ECO:0000250"/>
    <property type="project" value="UniProtKB"/>
</dbReference>
<dbReference type="GO" id="GO:0016020">
    <property type="term" value="C:membrane"/>
    <property type="evidence" value="ECO:0000266"/>
    <property type="project" value="RGD"/>
</dbReference>
<dbReference type="GO" id="GO:0005741">
    <property type="term" value="C:mitochondrial outer membrane"/>
    <property type="evidence" value="ECO:0007669"/>
    <property type="project" value="UniProtKB-SubCell"/>
</dbReference>
<dbReference type="GO" id="GO:0043025">
    <property type="term" value="C:neuronal cell body"/>
    <property type="evidence" value="ECO:0000314"/>
    <property type="project" value="RGD"/>
</dbReference>
<dbReference type="GO" id="GO:0005635">
    <property type="term" value="C:nuclear envelope"/>
    <property type="evidence" value="ECO:0000266"/>
    <property type="project" value="RGD"/>
</dbReference>
<dbReference type="GO" id="GO:0005634">
    <property type="term" value="C:nucleus"/>
    <property type="evidence" value="ECO:0000266"/>
    <property type="project" value="RGD"/>
</dbReference>
<dbReference type="GO" id="GO:0045335">
    <property type="term" value="C:phagocytic vesicle"/>
    <property type="evidence" value="ECO:0000250"/>
    <property type="project" value="UniProtKB"/>
</dbReference>
<dbReference type="GO" id="GO:0005886">
    <property type="term" value="C:plasma membrane"/>
    <property type="evidence" value="ECO:0000250"/>
    <property type="project" value="UniProtKB"/>
</dbReference>
<dbReference type="GO" id="GO:0016605">
    <property type="term" value="C:PML body"/>
    <property type="evidence" value="ECO:0000266"/>
    <property type="project" value="RGD"/>
</dbReference>
<dbReference type="GO" id="GO:0099524">
    <property type="term" value="C:postsynaptic cytosol"/>
    <property type="evidence" value="ECO:0000314"/>
    <property type="project" value="SynGO"/>
</dbReference>
<dbReference type="GO" id="GO:0032991">
    <property type="term" value="C:protein-containing complex"/>
    <property type="evidence" value="ECO:0000314"/>
    <property type="project" value="RGD"/>
</dbReference>
<dbReference type="GO" id="GO:1902554">
    <property type="term" value="C:serine/threonine protein kinase complex"/>
    <property type="evidence" value="ECO:0000266"/>
    <property type="project" value="RGD"/>
</dbReference>
<dbReference type="GO" id="GO:0031931">
    <property type="term" value="C:TORC1 complex"/>
    <property type="evidence" value="ECO:0000314"/>
    <property type="project" value="RGD"/>
</dbReference>
<dbReference type="GO" id="GO:0031932">
    <property type="term" value="C:TORC2 complex"/>
    <property type="evidence" value="ECO:0000250"/>
    <property type="project" value="UniProtKB"/>
</dbReference>
<dbReference type="GO" id="GO:0005524">
    <property type="term" value="F:ATP binding"/>
    <property type="evidence" value="ECO:0007669"/>
    <property type="project" value="UniProtKB-KW"/>
</dbReference>
<dbReference type="GO" id="GO:0042802">
    <property type="term" value="F:identical protein binding"/>
    <property type="evidence" value="ECO:0000266"/>
    <property type="project" value="RGD"/>
</dbReference>
<dbReference type="GO" id="GO:0000822">
    <property type="term" value="F:inositol hexakisphosphate binding"/>
    <property type="evidence" value="ECO:0000250"/>
    <property type="project" value="UniProtKB"/>
</dbReference>
<dbReference type="GO" id="GO:0046872">
    <property type="term" value="F:metal ion binding"/>
    <property type="evidence" value="ECO:0007669"/>
    <property type="project" value="UniProtKB-KW"/>
</dbReference>
<dbReference type="GO" id="GO:0051219">
    <property type="term" value="F:phosphoprotein binding"/>
    <property type="evidence" value="ECO:0000266"/>
    <property type="project" value="RGD"/>
</dbReference>
<dbReference type="GO" id="GO:0019904">
    <property type="term" value="F:protein domain specific binding"/>
    <property type="evidence" value="ECO:0000353"/>
    <property type="project" value="RGD"/>
</dbReference>
<dbReference type="GO" id="GO:0004672">
    <property type="term" value="F:protein kinase activity"/>
    <property type="evidence" value="ECO:0000266"/>
    <property type="project" value="RGD"/>
</dbReference>
<dbReference type="GO" id="GO:0019901">
    <property type="term" value="F:protein kinase binding"/>
    <property type="evidence" value="ECO:0000353"/>
    <property type="project" value="RGD"/>
</dbReference>
<dbReference type="GO" id="GO:0106310">
    <property type="term" value="F:protein serine kinase activity"/>
    <property type="evidence" value="ECO:0007669"/>
    <property type="project" value="RHEA"/>
</dbReference>
<dbReference type="GO" id="GO:0004674">
    <property type="term" value="F:protein serine/threonine kinase activity"/>
    <property type="evidence" value="ECO:0000314"/>
    <property type="project" value="RGD"/>
</dbReference>
<dbReference type="GO" id="GO:0004713">
    <property type="term" value="F:protein tyrosine kinase activity"/>
    <property type="evidence" value="ECO:0000266"/>
    <property type="project" value="RGD"/>
</dbReference>
<dbReference type="GO" id="GO:0043022">
    <property type="term" value="F:ribosome binding"/>
    <property type="evidence" value="ECO:0000250"/>
    <property type="project" value="UniProtKB"/>
</dbReference>
<dbReference type="GO" id="GO:0001002">
    <property type="term" value="F:RNA polymerase III type 1 promoter sequence-specific DNA binding"/>
    <property type="evidence" value="ECO:0000266"/>
    <property type="project" value="RGD"/>
</dbReference>
<dbReference type="GO" id="GO:0001003">
    <property type="term" value="F:RNA polymerase III type 2 promoter sequence-specific DNA binding"/>
    <property type="evidence" value="ECO:0000266"/>
    <property type="project" value="RGD"/>
</dbReference>
<dbReference type="GO" id="GO:0001006">
    <property type="term" value="F:RNA polymerase III type 3 promoter sequence-specific DNA binding"/>
    <property type="evidence" value="ECO:0000266"/>
    <property type="project" value="RGD"/>
</dbReference>
<dbReference type="GO" id="GO:0001156">
    <property type="term" value="F:TFIIIC-class transcription factor complex binding"/>
    <property type="evidence" value="ECO:0000266"/>
    <property type="project" value="RGD"/>
</dbReference>
<dbReference type="GO" id="GO:0006207">
    <property type="term" value="P:'de novo' pyrimidine nucleobase biosynthetic process"/>
    <property type="evidence" value="ECO:0000266"/>
    <property type="project" value="RGD"/>
</dbReference>
<dbReference type="GO" id="GO:0048266">
    <property type="term" value="P:behavioral response to pain"/>
    <property type="evidence" value="ECO:0000266"/>
    <property type="project" value="RGD"/>
</dbReference>
<dbReference type="GO" id="GO:0033173">
    <property type="term" value="P:calcineurin-NFAT signaling cascade"/>
    <property type="evidence" value="ECO:0000266"/>
    <property type="project" value="RGD"/>
</dbReference>
<dbReference type="GO" id="GO:0055006">
    <property type="term" value="P:cardiac cell development"/>
    <property type="evidence" value="ECO:0000266"/>
    <property type="project" value="RGD"/>
</dbReference>
<dbReference type="GO" id="GO:0055013">
    <property type="term" value="P:cardiac muscle cell development"/>
    <property type="evidence" value="ECO:0000266"/>
    <property type="project" value="RGD"/>
</dbReference>
<dbReference type="GO" id="GO:0060048">
    <property type="term" value="P:cardiac muscle contraction"/>
    <property type="evidence" value="ECO:0000266"/>
    <property type="project" value="RGD"/>
</dbReference>
<dbReference type="GO" id="GO:0048738">
    <property type="term" value="P:cardiac muscle tissue development"/>
    <property type="evidence" value="ECO:0000266"/>
    <property type="project" value="RGD"/>
</dbReference>
<dbReference type="GO" id="GO:0030030">
    <property type="term" value="P:cell projection organization"/>
    <property type="evidence" value="ECO:0000316"/>
    <property type="project" value="MGI"/>
</dbReference>
<dbReference type="GO" id="GO:0034198">
    <property type="term" value="P:cellular response to amino acid starvation"/>
    <property type="evidence" value="ECO:0000250"/>
    <property type="project" value="UniProtKB"/>
</dbReference>
<dbReference type="GO" id="GO:0071230">
    <property type="term" value="P:cellular response to amino acid stimulus"/>
    <property type="evidence" value="ECO:0000266"/>
    <property type="project" value="RGD"/>
</dbReference>
<dbReference type="GO" id="GO:0071456">
    <property type="term" value="P:cellular response to hypoxia"/>
    <property type="evidence" value="ECO:0000250"/>
    <property type="project" value="UniProtKB"/>
</dbReference>
<dbReference type="GO" id="GO:0032869">
    <property type="term" value="P:cellular response to insulin stimulus"/>
    <property type="evidence" value="ECO:0000250"/>
    <property type="project" value="UniProtKB"/>
</dbReference>
<dbReference type="GO" id="GO:0071233">
    <property type="term" value="P:cellular response to L-leucine"/>
    <property type="evidence" value="ECO:0000266"/>
    <property type="project" value="RGD"/>
</dbReference>
<dbReference type="GO" id="GO:1990253">
    <property type="term" value="P:cellular response to leucine starvation"/>
    <property type="evidence" value="ECO:0000266"/>
    <property type="project" value="RGD"/>
</dbReference>
<dbReference type="GO" id="GO:0061431">
    <property type="term" value="P:cellular response to methionine"/>
    <property type="evidence" value="ECO:0000266"/>
    <property type="project" value="RGD"/>
</dbReference>
<dbReference type="GO" id="GO:0031670">
    <property type="term" value="P:cellular response to nutrient"/>
    <property type="evidence" value="ECO:0000266"/>
    <property type="project" value="RGD"/>
</dbReference>
<dbReference type="GO" id="GO:0031669">
    <property type="term" value="P:cellular response to nutrient levels"/>
    <property type="evidence" value="ECO:0000250"/>
    <property type="project" value="UniProtKB"/>
</dbReference>
<dbReference type="GO" id="GO:0009267">
    <property type="term" value="P:cellular response to starvation"/>
    <property type="evidence" value="ECO:0000266"/>
    <property type="project" value="RGD"/>
</dbReference>
<dbReference type="GO" id="GO:0006112">
    <property type="term" value="P:energy reserve metabolic process"/>
    <property type="evidence" value="ECO:0000266"/>
    <property type="project" value="RGD"/>
</dbReference>
<dbReference type="GO" id="GO:0007281">
    <property type="term" value="P:germ cell development"/>
    <property type="evidence" value="ECO:0000266"/>
    <property type="project" value="RGD"/>
</dbReference>
<dbReference type="GO" id="GO:0003007">
    <property type="term" value="P:heart morphogenesis"/>
    <property type="evidence" value="ECO:0000266"/>
    <property type="project" value="RGD"/>
</dbReference>
<dbReference type="GO" id="GO:0003179">
    <property type="term" value="P:heart valve morphogenesis"/>
    <property type="evidence" value="ECO:0000266"/>
    <property type="project" value="RGD"/>
</dbReference>
<dbReference type="GO" id="GO:0006954">
    <property type="term" value="P:inflammatory response"/>
    <property type="evidence" value="ECO:0000266"/>
    <property type="project" value="RGD"/>
</dbReference>
<dbReference type="GO" id="GO:0007616">
    <property type="term" value="P:long-term memory"/>
    <property type="evidence" value="ECO:0000315"/>
    <property type="project" value="RGD"/>
</dbReference>
<dbReference type="GO" id="GO:0016236">
    <property type="term" value="P:macroautophagy"/>
    <property type="evidence" value="ECO:0000266"/>
    <property type="project" value="RGD"/>
</dbReference>
<dbReference type="GO" id="GO:0060135">
    <property type="term" value="P:maternal process involved in female pregnancy"/>
    <property type="evidence" value="ECO:0000314"/>
    <property type="project" value="RGD"/>
</dbReference>
<dbReference type="GO" id="GO:0048255">
    <property type="term" value="P:mRNA stabilization"/>
    <property type="evidence" value="ECO:0000315"/>
    <property type="project" value="RGD"/>
</dbReference>
<dbReference type="GO" id="GO:0035264">
    <property type="term" value="P:multicellular organism growth"/>
    <property type="evidence" value="ECO:0000266"/>
    <property type="project" value="RGD"/>
</dbReference>
<dbReference type="GO" id="GO:0010507">
    <property type="term" value="P:negative regulation of autophagy"/>
    <property type="evidence" value="ECO:0000315"/>
    <property type="project" value="RGD"/>
</dbReference>
<dbReference type="GO" id="GO:0070885">
    <property type="term" value="P:negative regulation of calcineurin-NFAT signaling cascade"/>
    <property type="evidence" value="ECO:0000266"/>
    <property type="project" value="RGD"/>
</dbReference>
<dbReference type="GO" id="GO:0045792">
    <property type="term" value="P:negative regulation of cell size"/>
    <property type="evidence" value="ECO:0000315"/>
    <property type="project" value="MGI"/>
</dbReference>
<dbReference type="GO" id="GO:1904193">
    <property type="term" value="P:negative regulation of cholangiocyte apoptotic process"/>
    <property type="evidence" value="ECO:0000315"/>
    <property type="project" value="RGD"/>
</dbReference>
<dbReference type="GO" id="GO:1904213">
    <property type="term" value="P:negative regulation of iodide transmembrane transport"/>
    <property type="evidence" value="ECO:0000315"/>
    <property type="project" value="RGD"/>
</dbReference>
<dbReference type="GO" id="GO:1905672">
    <property type="term" value="P:negative regulation of lysosome organization"/>
    <property type="evidence" value="ECO:0000250"/>
    <property type="project" value="UniProtKB"/>
</dbReference>
<dbReference type="GO" id="GO:0016242">
    <property type="term" value="P:negative regulation of macroautophagy"/>
    <property type="evidence" value="ECO:0000266"/>
    <property type="project" value="RGD"/>
</dbReference>
<dbReference type="GO" id="GO:0014736">
    <property type="term" value="P:negative regulation of muscle atrophy"/>
    <property type="evidence" value="ECO:0000315"/>
    <property type="project" value="RGD"/>
</dbReference>
<dbReference type="GO" id="GO:1900181">
    <property type="term" value="P:negative regulation of protein localization to nucleus"/>
    <property type="evidence" value="ECO:0000250"/>
    <property type="project" value="UniProtKB"/>
</dbReference>
<dbReference type="GO" id="GO:0031397">
    <property type="term" value="P:negative regulation of protein ubiquitination"/>
    <property type="evidence" value="ECO:0000315"/>
    <property type="project" value="RGD"/>
</dbReference>
<dbReference type="GO" id="GO:0019228">
    <property type="term" value="P:neuronal action potential"/>
    <property type="evidence" value="ECO:0000266"/>
    <property type="project" value="RGD"/>
</dbReference>
<dbReference type="GO" id="GO:0048709">
    <property type="term" value="P:oligodendrocyte differentiation"/>
    <property type="evidence" value="ECO:0000266"/>
    <property type="project" value="RGD"/>
</dbReference>
<dbReference type="GO" id="GO:0030838">
    <property type="term" value="P:positive regulation of actin filament polymerization"/>
    <property type="evidence" value="ECO:0000266"/>
    <property type="project" value="RGD"/>
</dbReference>
<dbReference type="GO" id="GO:0061051">
    <property type="term" value="P:positive regulation of cell growth involved in cardiac muscle cell development"/>
    <property type="evidence" value="ECO:0000315"/>
    <property type="project" value="RGD"/>
</dbReference>
<dbReference type="GO" id="GO:2000774">
    <property type="term" value="P:positive regulation of cellular senescence"/>
    <property type="evidence" value="ECO:0000315"/>
    <property type="project" value="RGD"/>
</dbReference>
<dbReference type="GO" id="GO:1904056">
    <property type="term" value="P:positive regulation of cholangiocyte proliferation"/>
    <property type="evidence" value="ECO:0000315"/>
    <property type="project" value="RGD"/>
</dbReference>
<dbReference type="GO" id="GO:0060999">
    <property type="term" value="P:positive regulation of dendritic spine development"/>
    <property type="evidence" value="ECO:0000315"/>
    <property type="project" value="RGD"/>
</dbReference>
<dbReference type="GO" id="GO:1904000">
    <property type="term" value="P:positive regulation of eating behavior"/>
    <property type="evidence" value="ECO:0000315"/>
    <property type="project" value="RGD"/>
</dbReference>
<dbReference type="GO" id="GO:0001938">
    <property type="term" value="P:positive regulation of endothelial cell proliferation"/>
    <property type="evidence" value="ECO:0000315"/>
    <property type="project" value="RGD"/>
</dbReference>
<dbReference type="GO" id="GO:1904037">
    <property type="term" value="P:positive regulation of epithelial cell apoptotic process"/>
    <property type="evidence" value="ECO:0000315"/>
    <property type="project" value="RGD"/>
</dbReference>
<dbReference type="GO" id="GO:0010718">
    <property type="term" value="P:positive regulation of epithelial to mesenchymal transition"/>
    <property type="evidence" value="ECO:0000266"/>
    <property type="project" value="RGD"/>
</dbReference>
<dbReference type="GO" id="GO:0060252">
    <property type="term" value="P:positive regulation of glial cell proliferation"/>
    <property type="evidence" value="ECO:0000315"/>
    <property type="project" value="RGD"/>
</dbReference>
<dbReference type="GO" id="GO:1904197">
    <property type="term" value="P:positive regulation of granulosa cell proliferation"/>
    <property type="evidence" value="ECO:0000315"/>
    <property type="project" value="RGD"/>
</dbReference>
<dbReference type="GO" id="GO:0051549">
    <property type="term" value="P:positive regulation of keratinocyte migration"/>
    <property type="evidence" value="ECO:0000266"/>
    <property type="project" value="RGD"/>
</dbReference>
<dbReference type="GO" id="GO:0010592">
    <property type="term" value="P:positive regulation of lamellipodium assembly"/>
    <property type="evidence" value="ECO:0000266"/>
    <property type="project" value="RGD"/>
</dbReference>
<dbReference type="GO" id="GO:0046889">
    <property type="term" value="P:positive regulation of lipid biosynthetic process"/>
    <property type="evidence" value="ECO:0000250"/>
    <property type="project" value="UniProtKB"/>
</dbReference>
<dbReference type="GO" id="GO:0010831">
    <property type="term" value="P:positive regulation of myotube differentiation"/>
    <property type="evidence" value="ECO:0000266"/>
    <property type="project" value="RGD"/>
</dbReference>
<dbReference type="GO" id="GO:0050769">
    <property type="term" value="P:positive regulation of neurogenesis"/>
    <property type="evidence" value="ECO:0000315"/>
    <property type="project" value="RGD"/>
</dbReference>
<dbReference type="GO" id="GO:0043525">
    <property type="term" value="P:positive regulation of neuron apoptotic process"/>
    <property type="evidence" value="ECO:0000315"/>
    <property type="project" value="RGD"/>
</dbReference>
<dbReference type="GO" id="GO:0014042">
    <property type="term" value="P:positive regulation of neuron maturation"/>
    <property type="evidence" value="ECO:0000315"/>
    <property type="project" value="RGD"/>
</dbReference>
<dbReference type="GO" id="GO:0010976">
    <property type="term" value="P:positive regulation of neuron projection development"/>
    <property type="evidence" value="ECO:0000315"/>
    <property type="project" value="RGD"/>
</dbReference>
<dbReference type="GO" id="GO:0045429">
    <property type="term" value="P:positive regulation of nitric oxide biosynthetic process"/>
    <property type="evidence" value="ECO:0000315"/>
    <property type="project" value="RGD"/>
</dbReference>
<dbReference type="GO" id="GO:0048714">
    <property type="term" value="P:positive regulation of oligodendrocyte differentiation"/>
    <property type="evidence" value="ECO:0000315"/>
    <property type="project" value="RGD"/>
</dbReference>
<dbReference type="GO" id="GO:0051897">
    <property type="term" value="P:positive regulation of phosphatidylinositol 3-kinase/protein kinase B signal transduction"/>
    <property type="evidence" value="ECO:0000315"/>
    <property type="project" value="RGD"/>
</dbReference>
<dbReference type="GO" id="GO:1904206">
    <property type="term" value="P:positive regulation of skeletal muscle hypertrophy"/>
    <property type="evidence" value="ECO:0000315"/>
    <property type="project" value="RGD"/>
</dbReference>
<dbReference type="GO" id="GO:0048661">
    <property type="term" value="P:positive regulation of smooth muscle cell proliferation"/>
    <property type="evidence" value="ECO:0000315"/>
    <property type="project" value="RGD"/>
</dbReference>
<dbReference type="GO" id="GO:0051496">
    <property type="term" value="P:positive regulation of stress fiber assembly"/>
    <property type="evidence" value="ECO:0000266"/>
    <property type="project" value="RGD"/>
</dbReference>
<dbReference type="GO" id="GO:0045945">
    <property type="term" value="P:positive regulation of transcription by RNA polymerase III"/>
    <property type="evidence" value="ECO:0000266"/>
    <property type="project" value="RGD"/>
</dbReference>
<dbReference type="GO" id="GO:1901838">
    <property type="term" value="P:positive regulation of transcription of nucleolar large rRNA by RNA polymerase I"/>
    <property type="evidence" value="ECO:0000266"/>
    <property type="project" value="RGD"/>
</dbReference>
<dbReference type="GO" id="GO:0045727">
    <property type="term" value="P:positive regulation of translation"/>
    <property type="evidence" value="ECO:0000315"/>
    <property type="project" value="RGD"/>
</dbReference>
<dbReference type="GO" id="GO:0045948">
    <property type="term" value="P:positive regulation of translational initiation"/>
    <property type="evidence" value="ECO:0000266"/>
    <property type="project" value="RGD"/>
</dbReference>
<dbReference type="GO" id="GO:2000060">
    <property type="term" value="P:positive regulation of ubiquitin-dependent protein catabolic process"/>
    <property type="evidence" value="ECO:0000250"/>
    <property type="project" value="UniProtKB"/>
</dbReference>
<dbReference type="GO" id="GO:1903691">
    <property type="term" value="P:positive regulation of wound healing, spreading of epidermal cells"/>
    <property type="evidence" value="ECO:0000266"/>
    <property type="project" value="RGD"/>
</dbReference>
<dbReference type="GO" id="GO:0009791">
    <property type="term" value="P:post-embryonic development"/>
    <property type="evidence" value="ECO:0000266"/>
    <property type="project" value="RGD"/>
</dbReference>
<dbReference type="GO" id="GO:0031648">
    <property type="term" value="P:protein destabilization"/>
    <property type="evidence" value="ECO:0000266"/>
    <property type="project" value="RGD"/>
</dbReference>
<dbReference type="GO" id="GO:0032956">
    <property type="term" value="P:regulation of actin cytoskeleton organization"/>
    <property type="evidence" value="ECO:0000266"/>
    <property type="project" value="RGD"/>
</dbReference>
<dbReference type="GO" id="GO:2000785">
    <property type="term" value="P:regulation of autophagosome assembly"/>
    <property type="evidence" value="ECO:0000266"/>
    <property type="project" value="RGD"/>
</dbReference>
<dbReference type="GO" id="GO:0010506">
    <property type="term" value="P:regulation of autophagy"/>
    <property type="evidence" value="ECO:0000250"/>
    <property type="project" value="UniProtKB"/>
</dbReference>
<dbReference type="GO" id="GO:0090335">
    <property type="term" value="P:regulation of brown fat cell differentiation"/>
    <property type="evidence" value="ECO:0000315"/>
    <property type="project" value="RGD"/>
</dbReference>
<dbReference type="GO" id="GO:0006109">
    <property type="term" value="P:regulation of carbohydrate metabolic process"/>
    <property type="evidence" value="ECO:0000314"/>
    <property type="project" value="RGD"/>
</dbReference>
<dbReference type="GO" id="GO:0043610">
    <property type="term" value="P:regulation of carbohydrate utilization"/>
    <property type="evidence" value="ECO:0000314"/>
    <property type="project" value="RGD"/>
</dbReference>
<dbReference type="GO" id="GO:0001558">
    <property type="term" value="P:regulation of cell growth"/>
    <property type="evidence" value="ECO:0000266"/>
    <property type="project" value="RGD"/>
</dbReference>
<dbReference type="GO" id="GO:0008361">
    <property type="term" value="P:regulation of cell size"/>
    <property type="evidence" value="ECO:0000266"/>
    <property type="project" value="RGD"/>
</dbReference>
<dbReference type="GO" id="GO:0042752">
    <property type="term" value="P:regulation of circadian rhythm"/>
    <property type="evidence" value="ECO:0000250"/>
    <property type="project" value="UniProtKB"/>
</dbReference>
<dbReference type="GO" id="GO:0031998">
    <property type="term" value="P:regulation of fatty acid beta-oxidation"/>
    <property type="evidence" value="ECO:0000314"/>
    <property type="project" value="RGD"/>
</dbReference>
<dbReference type="GO" id="GO:0005979">
    <property type="term" value="P:regulation of glycogen biosynthetic process"/>
    <property type="evidence" value="ECO:0000314"/>
    <property type="project" value="RGD"/>
</dbReference>
<dbReference type="GO" id="GO:1904059">
    <property type="term" value="P:regulation of locomotor rhythm"/>
    <property type="evidence" value="ECO:0000250"/>
    <property type="project" value="UniProtKB"/>
</dbReference>
<dbReference type="GO" id="GO:1905671">
    <property type="term" value="P:regulation of lysosome organization"/>
    <property type="evidence" value="ECO:0000250"/>
    <property type="project" value="UniProtKB"/>
</dbReference>
<dbReference type="GO" id="GO:0090559">
    <property type="term" value="P:regulation of membrane permeability"/>
    <property type="evidence" value="ECO:0000266"/>
    <property type="project" value="RGD"/>
</dbReference>
<dbReference type="GO" id="GO:0031641">
    <property type="term" value="P:regulation of myelination"/>
    <property type="evidence" value="ECO:0000266"/>
    <property type="project" value="RGD"/>
</dbReference>
<dbReference type="GO" id="GO:0045670">
    <property type="term" value="P:regulation of osteoclast differentiation"/>
    <property type="evidence" value="ECO:0000250"/>
    <property type="project" value="UniProtKB"/>
</dbReference>
<dbReference type="GO" id="GO:0051896">
    <property type="term" value="P:regulation of phosphatidylinositol 3-kinase/protein kinase B signal transduction"/>
    <property type="evidence" value="ECO:0000266"/>
    <property type="project" value="RGD"/>
</dbReference>
<dbReference type="GO" id="GO:0032095">
    <property type="term" value="P:regulation of response to food"/>
    <property type="evidence" value="ECO:0000314"/>
    <property type="project" value="RGD"/>
</dbReference>
<dbReference type="GO" id="GO:0099547">
    <property type="term" value="P:regulation of translation at synapse, modulating synaptic transmission"/>
    <property type="evidence" value="ECO:0000314"/>
    <property type="project" value="SynGO"/>
</dbReference>
<dbReference type="GO" id="GO:0014823">
    <property type="term" value="P:response to activity"/>
    <property type="evidence" value="ECO:0000270"/>
    <property type="project" value="RGD"/>
</dbReference>
<dbReference type="GO" id="GO:0043200">
    <property type="term" value="P:response to amino acid"/>
    <property type="evidence" value="ECO:0000266"/>
    <property type="project" value="RGD"/>
</dbReference>
<dbReference type="GO" id="GO:0042220">
    <property type="term" value="P:response to cocaine"/>
    <property type="evidence" value="ECO:0000315"/>
    <property type="project" value="RGD"/>
</dbReference>
<dbReference type="GO" id="GO:0009408">
    <property type="term" value="P:response to heat"/>
    <property type="evidence" value="ECO:0000266"/>
    <property type="project" value="RGD"/>
</dbReference>
<dbReference type="GO" id="GO:0032868">
    <property type="term" value="P:response to insulin"/>
    <property type="evidence" value="ECO:0000266"/>
    <property type="project" value="RGD"/>
</dbReference>
<dbReference type="GO" id="GO:0031667">
    <property type="term" value="P:response to nutrient levels"/>
    <property type="evidence" value="ECO:0000250"/>
    <property type="project" value="UniProtKB"/>
</dbReference>
<dbReference type="GO" id="GO:0031529">
    <property type="term" value="P:ruffle organization"/>
    <property type="evidence" value="ECO:0000266"/>
    <property type="project" value="RGD"/>
</dbReference>
<dbReference type="GO" id="GO:0035176">
    <property type="term" value="P:social behavior"/>
    <property type="evidence" value="ECO:0000315"/>
    <property type="project" value="RGD"/>
</dbReference>
<dbReference type="GO" id="GO:0021510">
    <property type="term" value="P:spinal cord development"/>
    <property type="evidence" value="ECO:0000314"/>
    <property type="project" value="RGD"/>
</dbReference>
<dbReference type="GO" id="GO:0002296">
    <property type="term" value="P:T-helper 1 cell lineage commitment"/>
    <property type="evidence" value="ECO:0000266"/>
    <property type="project" value="RGD"/>
</dbReference>
<dbReference type="GO" id="GO:0031929">
    <property type="term" value="P:TOR signaling"/>
    <property type="evidence" value="ECO:0000250"/>
    <property type="project" value="UniProtKB"/>
</dbReference>
<dbReference type="GO" id="GO:0038202">
    <property type="term" value="P:TORC1 signaling"/>
    <property type="evidence" value="ECO:0000250"/>
    <property type="project" value="UniProtKB"/>
</dbReference>
<dbReference type="GO" id="GO:0038203">
    <property type="term" value="P:TORC2 signaling"/>
    <property type="evidence" value="ECO:0000250"/>
    <property type="project" value="UniProtKB"/>
</dbReference>
<dbReference type="GO" id="GO:0008542">
    <property type="term" value="P:visual learning"/>
    <property type="evidence" value="ECO:0000315"/>
    <property type="project" value="RGD"/>
</dbReference>
<dbReference type="GO" id="GO:0050882">
    <property type="term" value="P:voluntary musculoskeletal movement"/>
    <property type="evidence" value="ECO:0000266"/>
    <property type="project" value="RGD"/>
</dbReference>
<dbReference type="CDD" id="cd05169">
    <property type="entry name" value="PIKKc_TOR"/>
    <property type="match status" value="1"/>
</dbReference>
<dbReference type="FunFam" id="1.10.1070.11:FF:000074">
    <property type="entry name" value="DJ576K7.1 (FK506 binding protein 12-rapamycin associated protein 1)"/>
    <property type="match status" value="1"/>
</dbReference>
<dbReference type="FunFam" id="1.10.1070.11:FF:000058">
    <property type="entry name" value="MTOR isoform 6"/>
    <property type="match status" value="1"/>
</dbReference>
<dbReference type="FunFam" id="1.25.10.10:FF:000060">
    <property type="entry name" value="Serine/threonine-protein kinase mTOR"/>
    <property type="match status" value="1"/>
</dbReference>
<dbReference type="FunFam" id="1.25.10.10:FF:000094">
    <property type="entry name" value="Serine/threonine-protein kinase mTOR"/>
    <property type="match status" value="1"/>
</dbReference>
<dbReference type="FunFam" id="1.25.10.10:FF:000532">
    <property type="entry name" value="Serine/threonine-protein kinase mTOR"/>
    <property type="match status" value="1"/>
</dbReference>
<dbReference type="FunFam" id="1.20.120.150:FF:000001">
    <property type="entry name" value="Serine/threonine-protein kinase TOR"/>
    <property type="match status" value="1"/>
</dbReference>
<dbReference type="FunFam" id="1.25.10.10:FF:000083">
    <property type="entry name" value="Serine/threonine-protein kinase TOR"/>
    <property type="match status" value="1"/>
</dbReference>
<dbReference type="FunFam" id="3.30.1010.10:FF:000004">
    <property type="entry name" value="Serine/threonine-protein kinase TOR"/>
    <property type="match status" value="1"/>
</dbReference>
<dbReference type="Gene3D" id="1.20.120.150">
    <property type="entry name" value="FKBP12-rapamycin binding domain"/>
    <property type="match status" value="1"/>
</dbReference>
<dbReference type="Gene3D" id="1.25.10.10">
    <property type="entry name" value="Leucine-rich Repeat Variant"/>
    <property type="match status" value="4"/>
</dbReference>
<dbReference type="Gene3D" id="1.10.1070.11">
    <property type="entry name" value="Phosphatidylinositol 3-/4-kinase, catalytic domain"/>
    <property type="match status" value="1"/>
</dbReference>
<dbReference type="Gene3D" id="3.30.1010.10">
    <property type="entry name" value="Phosphatidylinositol 3-kinase Catalytic Subunit, Chain A, domain 4"/>
    <property type="match status" value="1"/>
</dbReference>
<dbReference type="Gene3D" id="1.25.40.10">
    <property type="entry name" value="Tetratricopeptide repeat domain"/>
    <property type="match status" value="1"/>
</dbReference>
<dbReference type="InterPro" id="IPR011989">
    <property type="entry name" value="ARM-like"/>
</dbReference>
<dbReference type="InterPro" id="IPR016024">
    <property type="entry name" value="ARM-type_fold"/>
</dbReference>
<dbReference type="InterPro" id="IPR050517">
    <property type="entry name" value="DDR_Repair_Kinase"/>
</dbReference>
<dbReference type="InterPro" id="IPR003152">
    <property type="entry name" value="FATC_dom"/>
</dbReference>
<dbReference type="InterPro" id="IPR009076">
    <property type="entry name" value="FRB_dom"/>
</dbReference>
<dbReference type="InterPro" id="IPR036738">
    <property type="entry name" value="FRB_sf"/>
</dbReference>
<dbReference type="InterPro" id="IPR011009">
    <property type="entry name" value="Kinase-like_dom_sf"/>
</dbReference>
<dbReference type="InterPro" id="IPR024585">
    <property type="entry name" value="mTOR_dom"/>
</dbReference>
<dbReference type="InterPro" id="IPR000403">
    <property type="entry name" value="PI3/4_kinase_cat_dom"/>
</dbReference>
<dbReference type="InterPro" id="IPR036940">
    <property type="entry name" value="PI3/4_kinase_cat_sf"/>
</dbReference>
<dbReference type="InterPro" id="IPR018936">
    <property type="entry name" value="PI3/4_kinase_CS"/>
</dbReference>
<dbReference type="InterPro" id="IPR003151">
    <property type="entry name" value="PIK-rel_kinase_FAT"/>
</dbReference>
<dbReference type="InterPro" id="IPR014009">
    <property type="entry name" value="PIK_FAT"/>
</dbReference>
<dbReference type="InterPro" id="IPR026683">
    <property type="entry name" value="TOR_cat"/>
</dbReference>
<dbReference type="InterPro" id="IPR011990">
    <property type="entry name" value="TPR-like_helical_dom_sf"/>
</dbReference>
<dbReference type="PANTHER" id="PTHR11139">
    <property type="entry name" value="ATAXIA TELANGIECTASIA MUTATED ATM -RELATED"/>
    <property type="match status" value="1"/>
</dbReference>
<dbReference type="PANTHER" id="PTHR11139:SF9">
    <property type="entry name" value="SERINE_THREONINE-PROTEIN KINASE MTOR"/>
    <property type="match status" value="1"/>
</dbReference>
<dbReference type="Pfam" id="PF02259">
    <property type="entry name" value="FAT"/>
    <property type="match status" value="1"/>
</dbReference>
<dbReference type="Pfam" id="PF02260">
    <property type="entry name" value="FATC"/>
    <property type="match status" value="1"/>
</dbReference>
<dbReference type="Pfam" id="PF08771">
    <property type="entry name" value="FRB_dom"/>
    <property type="match status" value="1"/>
</dbReference>
<dbReference type="Pfam" id="PF23593">
    <property type="entry name" value="HEAT_ATR"/>
    <property type="match status" value="1"/>
</dbReference>
<dbReference type="Pfam" id="PF11865">
    <property type="entry name" value="mTOR_dom"/>
    <property type="match status" value="1"/>
</dbReference>
<dbReference type="Pfam" id="PF00454">
    <property type="entry name" value="PI3_PI4_kinase"/>
    <property type="match status" value="1"/>
</dbReference>
<dbReference type="SMART" id="SM01346">
    <property type="entry name" value="DUF3385"/>
    <property type="match status" value="1"/>
</dbReference>
<dbReference type="SMART" id="SM01343">
    <property type="entry name" value="FATC"/>
    <property type="match status" value="1"/>
</dbReference>
<dbReference type="SMART" id="SM00146">
    <property type="entry name" value="PI3Kc"/>
    <property type="match status" value="1"/>
</dbReference>
<dbReference type="SMART" id="SM01345">
    <property type="entry name" value="Rapamycin_bind"/>
    <property type="match status" value="1"/>
</dbReference>
<dbReference type="SUPFAM" id="SSF48371">
    <property type="entry name" value="ARM repeat"/>
    <property type="match status" value="1"/>
</dbReference>
<dbReference type="SUPFAM" id="SSF47212">
    <property type="entry name" value="FKBP12-rapamycin-binding domain of FKBP-rapamycin-associated protein (FRAP)"/>
    <property type="match status" value="1"/>
</dbReference>
<dbReference type="SUPFAM" id="SSF56112">
    <property type="entry name" value="Protein kinase-like (PK-like)"/>
    <property type="match status" value="1"/>
</dbReference>
<dbReference type="PROSITE" id="PS51189">
    <property type="entry name" value="FAT"/>
    <property type="match status" value="1"/>
</dbReference>
<dbReference type="PROSITE" id="PS51190">
    <property type="entry name" value="FATC"/>
    <property type="match status" value="1"/>
</dbReference>
<dbReference type="PROSITE" id="PS00915">
    <property type="entry name" value="PI3_4_KINASE_1"/>
    <property type="match status" value="1"/>
</dbReference>
<dbReference type="PROSITE" id="PS00916">
    <property type="entry name" value="PI3_4_KINASE_2"/>
    <property type="match status" value="1"/>
</dbReference>
<dbReference type="PROSITE" id="PS50290">
    <property type="entry name" value="PI3_4_KINASE_3"/>
    <property type="match status" value="1"/>
</dbReference>
<reference key="1">
    <citation type="journal article" date="1995" name="J. Biol. Chem.">
        <title>Isolation of a protein target of the FKBP12-rapamycin complex in mammalian cells.</title>
        <authorList>
            <person name="Sabers C.J."/>
            <person name="Martin M.M."/>
            <person name="Brunn G.J."/>
            <person name="Williams J.M."/>
            <person name="Dumont F.J."/>
            <person name="Wiederrecht G."/>
            <person name="Abraham R.T."/>
        </authorList>
    </citation>
    <scope>NUCLEOTIDE SEQUENCE [MRNA]</scope>
</reference>
<reference key="2">
    <citation type="journal article" date="1994" name="Cell">
        <title>RAFT1: a mammalian protein that binds to FKBP12 in a rapamycin-dependent fashion and is homologous to yeast TORs.</title>
        <authorList>
            <person name="Sabatini D.M."/>
            <person name="Erdjument-Bromage H."/>
            <person name="Lui M."/>
            <person name="Tempst P."/>
            <person name="Snyder S.H."/>
        </authorList>
    </citation>
    <scope>NUCLEOTIDE SEQUENCE [MRNA]</scope>
    <source>
        <tissue>Brain</tissue>
    </source>
</reference>
<reference key="3">
    <citation type="submission" date="2007-09" db="UniProtKB">
        <authorList>
            <person name="Lubec G."/>
            <person name="Kang S.U."/>
            <person name="Lubec S."/>
        </authorList>
    </citation>
    <scope>PROTEIN SEQUENCE OF 215-226 AND 533-541</scope>
    <scope>IDENTIFICATION BY MASS SPECTROMETRY</scope>
    <source>
        <strain>Sprague-Dawley</strain>
        <tissue>Brain</tissue>
    </source>
</reference>
<reference key="4">
    <citation type="journal article" date="1998" name="Proc. Natl. Acad. Sci. U.S.A.">
        <title>RAFT1 phosphorylation of the translational regulators p70 S6 kinase and 4E-BP1.</title>
        <authorList>
            <person name="Burnett P.E."/>
            <person name="Barrow R.K."/>
            <person name="Cohen N.A."/>
            <person name="Snyder S.H."/>
            <person name="Sabatini D.M."/>
        </authorList>
    </citation>
    <scope>FUNCTION IN PHOSPHORYLATION OF RPS6KB1 AND EIF4EBP1</scope>
    <scope>CATALYTIC ACTIVITY</scope>
</reference>
<reference key="5">
    <citation type="journal article" date="2011" name="Mol. Cell. Biol.">
        <title>mTOR kinase domain phosphorylation promotes mTORC1 signaling, cell growth, and cell cycle progression.</title>
        <authorList>
            <person name="Ekim B."/>
            <person name="Magnuson B."/>
            <person name="Acosta-Jaquez H.A."/>
            <person name="Keller J.A."/>
            <person name="Feener E.P."/>
            <person name="Fingar D.C."/>
        </authorList>
    </citation>
    <scope>PHOSPHORYLATION AT THR-2164</scope>
</reference>
<reference key="6">
    <citation type="journal article" date="2012" name="Nat. Commun.">
        <title>Quantitative maps of protein phosphorylation sites across 14 different rat organs and tissues.</title>
        <authorList>
            <person name="Lundby A."/>
            <person name="Secher A."/>
            <person name="Lage K."/>
            <person name="Nordsborg N.B."/>
            <person name="Dmytriyev A."/>
            <person name="Lundby C."/>
            <person name="Olsen J.V."/>
        </authorList>
    </citation>
    <scope>IDENTIFICATION BY MASS SPECTROMETRY [LARGE SCALE ANALYSIS]</scope>
</reference>
<reference key="7">
    <citation type="journal article" date="2013" name="J. Biol. Chem.">
        <title>Skeletal muscle-derived myonectin activates the mammalian target of rapamycin (mTOR) pathway to suppress autophagy in liver.</title>
        <authorList>
            <person name="Seldin M.M."/>
            <person name="Lei X."/>
            <person name="Tan S.Y."/>
            <person name="Stanson K.P."/>
            <person name="Wei Z."/>
            <person name="Wong G.W."/>
        </authorList>
    </citation>
    <scope>PHOSPHORYLATION AT SER-2448</scope>
</reference>
<accession>P42346</accession>
<evidence type="ECO:0000250" key="1">
    <source>
        <dbReference type="UniProtKB" id="P42345"/>
    </source>
</evidence>
<evidence type="ECO:0000250" key="2">
    <source>
        <dbReference type="UniProtKB" id="Q9JLN9"/>
    </source>
</evidence>
<evidence type="ECO:0000255" key="3">
    <source>
        <dbReference type="PROSITE-ProRule" id="PRU00269"/>
    </source>
</evidence>
<evidence type="ECO:0000255" key="4">
    <source>
        <dbReference type="PROSITE-ProRule" id="PRU00534"/>
    </source>
</evidence>
<evidence type="ECO:0000255" key="5">
    <source>
        <dbReference type="PROSITE-ProRule" id="PRU00535"/>
    </source>
</evidence>
<evidence type="ECO:0000256" key="6">
    <source>
        <dbReference type="SAM" id="MobiDB-lite"/>
    </source>
</evidence>
<evidence type="ECO:0000269" key="7">
    <source>
    </source>
</evidence>
<evidence type="ECO:0000269" key="8">
    <source>
    </source>
</evidence>
<evidence type="ECO:0000269" key="9">
    <source>
    </source>
</evidence>
<evidence type="ECO:0000305" key="10"/>
<evidence type="ECO:0000312" key="11">
    <source>
        <dbReference type="RGD" id="68371"/>
    </source>
</evidence>
<organism>
    <name type="scientific">Rattus norvegicus</name>
    <name type="common">Rat</name>
    <dbReference type="NCBI Taxonomy" id="10116"/>
    <lineage>
        <taxon>Eukaryota</taxon>
        <taxon>Metazoa</taxon>
        <taxon>Chordata</taxon>
        <taxon>Craniata</taxon>
        <taxon>Vertebrata</taxon>
        <taxon>Euteleostomi</taxon>
        <taxon>Mammalia</taxon>
        <taxon>Eutheria</taxon>
        <taxon>Euarchontoglires</taxon>
        <taxon>Glires</taxon>
        <taxon>Rodentia</taxon>
        <taxon>Myomorpha</taxon>
        <taxon>Muroidea</taxon>
        <taxon>Muridae</taxon>
        <taxon>Murinae</taxon>
        <taxon>Rattus</taxon>
    </lineage>
</organism>
<gene>
    <name evidence="11" type="primary">Mtor</name>
    <name type="synonym">Frap1</name>
    <name type="synonym">Raft1</name>
</gene>